<name>MZM1_PARBD</name>
<proteinExistence type="inferred from homology"/>
<sequence length="124" mass="13713">MATTPLPNALSAYRLLLRATRIAFQGDFTTLHAARAEARKHFDQNRRLGVDTPKHIQHAVETAEILRTNVVQGVRVEGSGEAGKEEQRYELRIHEHIERGDNDTIKTAGNKGIKAAVGKTCSQS</sequence>
<comment type="function">
    <text evidence="1">Assembly factor required for Rieske Fe-S protein RIP1 incorporation into the cytochrome b-c1 (CIII) complex. Functions as a chaperone, binding to this subunit within the mitochondrial matrix and stabilizing it prior to its translocation and insertion into the late CIII dimeric intermediate within the mitochondrial inner membrane. Modulates the mitochondrial matrix zinc pool (By similarity).</text>
</comment>
<comment type="subunit">
    <text evidence="1">Interacts with RIP1.</text>
</comment>
<comment type="subcellular location">
    <subcellularLocation>
        <location evidence="1">Mitochondrion matrix</location>
    </subcellularLocation>
</comment>
<comment type="similarity">
    <text evidence="3">Belongs to the complex I LYR family. MZM1 subfamily.</text>
</comment>
<reference key="1">
    <citation type="journal article" date="2011" name="PLoS Genet.">
        <title>Comparative genomic analysis of human fungal pathogens causing paracoccidioidomycosis.</title>
        <authorList>
            <person name="Desjardins C.A."/>
            <person name="Champion M.D."/>
            <person name="Holder J.W."/>
            <person name="Muszewska A."/>
            <person name="Goldberg J."/>
            <person name="Bailao A.M."/>
            <person name="Brigido M.M."/>
            <person name="Ferreira M.E."/>
            <person name="Garcia A.M."/>
            <person name="Grynberg M."/>
            <person name="Gujja S."/>
            <person name="Heiman D.I."/>
            <person name="Henn M.R."/>
            <person name="Kodira C.D."/>
            <person name="Leon-Narvaez H."/>
            <person name="Longo L.V.G."/>
            <person name="Ma L.-J."/>
            <person name="Malavazi I."/>
            <person name="Matsuo A.L."/>
            <person name="Morais F.V."/>
            <person name="Pereira M."/>
            <person name="Rodriguez-Brito S."/>
            <person name="Sakthikumar S."/>
            <person name="Salem-Izacc S.M."/>
            <person name="Sykes S.M."/>
            <person name="Teixeira M.M."/>
            <person name="Vallejo M.C."/>
            <person name="Walter M.E."/>
            <person name="Yandava C."/>
            <person name="Young S."/>
            <person name="Zeng Q."/>
            <person name="Zucker J."/>
            <person name="Felipe M.S."/>
            <person name="Goldman G.H."/>
            <person name="Haas B.J."/>
            <person name="McEwen J.G."/>
            <person name="Nino-Vega G."/>
            <person name="Puccia R."/>
            <person name="San-Blas G."/>
            <person name="Soares C.M."/>
            <person name="Birren B.W."/>
            <person name="Cuomo C.A."/>
        </authorList>
    </citation>
    <scope>NUCLEOTIDE SEQUENCE [LARGE SCALE GENOMIC DNA]</scope>
    <source>
        <strain>Pb18</strain>
    </source>
</reference>
<evidence type="ECO:0000250" key="1"/>
<evidence type="ECO:0000255" key="2"/>
<evidence type="ECO:0000305" key="3"/>
<accession>C1G016</accession>
<keyword id="KW-0143">Chaperone</keyword>
<keyword id="KW-0496">Mitochondrion</keyword>
<keyword id="KW-1185">Reference proteome</keyword>
<keyword id="KW-0809">Transit peptide</keyword>
<feature type="transit peptide" description="Mitochondrion" evidence="2">
    <location>
        <begin position="1"/>
        <end status="unknown"/>
    </location>
</feature>
<feature type="chain" id="PRO_0000405504" description="Mitochondrial zinc maintenance protein 1, mitochondrial">
    <location>
        <begin status="unknown"/>
        <end position="124"/>
    </location>
</feature>
<dbReference type="EMBL" id="KN275957">
    <property type="protein sequence ID" value="EEH43917.1"/>
    <property type="molecule type" value="Genomic_DNA"/>
</dbReference>
<dbReference type="RefSeq" id="XP_010756251.1">
    <property type="nucleotide sequence ID" value="XM_010757949.1"/>
</dbReference>
<dbReference type="SMR" id="C1G016"/>
<dbReference type="FunCoup" id="C1G016">
    <property type="interactions" value="11"/>
</dbReference>
<dbReference type="STRING" id="502780.C1G016"/>
<dbReference type="GeneID" id="22580083"/>
<dbReference type="KEGG" id="pbn:PADG_00206"/>
<dbReference type="VEuPathDB" id="FungiDB:PADG_00206"/>
<dbReference type="eggNOG" id="ENOG502S6EF">
    <property type="taxonomic scope" value="Eukaryota"/>
</dbReference>
<dbReference type="HOGENOM" id="CLU_147114_2_2_1"/>
<dbReference type="InParanoid" id="C1G016"/>
<dbReference type="OMA" id="KYKLRIH"/>
<dbReference type="OrthoDB" id="27955at33183"/>
<dbReference type="Proteomes" id="UP000001628">
    <property type="component" value="Unassembled WGS sequence"/>
</dbReference>
<dbReference type="GO" id="GO:0005759">
    <property type="term" value="C:mitochondrial matrix"/>
    <property type="evidence" value="ECO:0007669"/>
    <property type="project" value="UniProtKB-SubCell"/>
</dbReference>
<dbReference type="GO" id="GO:0044183">
    <property type="term" value="F:protein folding chaperone"/>
    <property type="evidence" value="ECO:0007669"/>
    <property type="project" value="TreeGrafter"/>
</dbReference>
<dbReference type="GO" id="GO:0034551">
    <property type="term" value="P:mitochondrial respiratory chain complex III assembly"/>
    <property type="evidence" value="ECO:0007669"/>
    <property type="project" value="InterPro"/>
</dbReference>
<dbReference type="CDD" id="cd20267">
    <property type="entry name" value="Complex1_LYR_LYRM7"/>
    <property type="match status" value="1"/>
</dbReference>
<dbReference type="InterPro" id="IPR008011">
    <property type="entry name" value="Complex1_LYR_dom"/>
</dbReference>
<dbReference type="InterPro" id="IPR045298">
    <property type="entry name" value="Complex1_LYR_LYRM7"/>
</dbReference>
<dbReference type="InterPro" id="IPR050435">
    <property type="entry name" value="MZM1/LYRM7"/>
</dbReference>
<dbReference type="PANTHER" id="PTHR46749">
    <property type="entry name" value="COMPLEX III ASSEMBLY FACTOR LYRM7"/>
    <property type="match status" value="1"/>
</dbReference>
<dbReference type="PANTHER" id="PTHR46749:SF1">
    <property type="entry name" value="COMPLEX III ASSEMBLY FACTOR LYRM7"/>
    <property type="match status" value="1"/>
</dbReference>
<dbReference type="Pfam" id="PF05347">
    <property type="entry name" value="Complex1_LYR"/>
    <property type="match status" value="1"/>
</dbReference>
<gene>
    <name type="primary">MZM1</name>
    <name type="ORF">PADG_00206</name>
</gene>
<protein>
    <recommendedName>
        <fullName>Mitochondrial zinc maintenance protein 1, mitochondrial</fullName>
    </recommendedName>
</protein>
<organism>
    <name type="scientific">Paracoccidioides brasiliensis (strain Pb18)</name>
    <dbReference type="NCBI Taxonomy" id="502780"/>
    <lineage>
        <taxon>Eukaryota</taxon>
        <taxon>Fungi</taxon>
        <taxon>Dikarya</taxon>
        <taxon>Ascomycota</taxon>
        <taxon>Pezizomycotina</taxon>
        <taxon>Eurotiomycetes</taxon>
        <taxon>Eurotiomycetidae</taxon>
        <taxon>Onygenales</taxon>
        <taxon>Ajellomycetaceae</taxon>
        <taxon>Paracoccidioides</taxon>
    </lineage>
</organism>